<dbReference type="EC" id="4.1.1.11" evidence="1"/>
<dbReference type="EMBL" id="CP000783">
    <property type="protein sequence ID" value="ABU78424.1"/>
    <property type="molecule type" value="Genomic_DNA"/>
</dbReference>
<dbReference type="RefSeq" id="WP_004387652.1">
    <property type="nucleotide sequence ID" value="NC_009778.1"/>
</dbReference>
<dbReference type="SMR" id="A7MGP8"/>
<dbReference type="GeneID" id="92807633"/>
<dbReference type="KEGG" id="esa:ESA_03202"/>
<dbReference type="HOGENOM" id="CLU_115305_2_1_6"/>
<dbReference type="UniPathway" id="UPA00028">
    <property type="reaction ID" value="UER00002"/>
</dbReference>
<dbReference type="Proteomes" id="UP000000260">
    <property type="component" value="Chromosome"/>
</dbReference>
<dbReference type="GO" id="GO:0005829">
    <property type="term" value="C:cytosol"/>
    <property type="evidence" value="ECO:0007669"/>
    <property type="project" value="TreeGrafter"/>
</dbReference>
<dbReference type="GO" id="GO:0004068">
    <property type="term" value="F:aspartate 1-decarboxylase activity"/>
    <property type="evidence" value="ECO:0007669"/>
    <property type="project" value="UniProtKB-UniRule"/>
</dbReference>
<dbReference type="GO" id="GO:0006523">
    <property type="term" value="P:alanine biosynthetic process"/>
    <property type="evidence" value="ECO:0007669"/>
    <property type="project" value="InterPro"/>
</dbReference>
<dbReference type="GO" id="GO:0015940">
    <property type="term" value="P:pantothenate biosynthetic process"/>
    <property type="evidence" value="ECO:0007669"/>
    <property type="project" value="UniProtKB-UniRule"/>
</dbReference>
<dbReference type="CDD" id="cd06919">
    <property type="entry name" value="Asp_decarbox"/>
    <property type="match status" value="1"/>
</dbReference>
<dbReference type="FunFam" id="2.40.40.20:FF:000004">
    <property type="entry name" value="Aspartate 1-decarboxylase"/>
    <property type="match status" value="1"/>
</dbReference>
<dbReference type="Gene3D" id="2.40.40.20">
    <property type="match status" value="1"/>
</dbReference>
<dbReference type="HAMAP" id="MF_00446">
    <property type="entry name" value="PanD"/>
    <property type="match status" value="1"/>
</dbReference>
<dbReference type="InterPro" id="IPR009010">
    <property type="entry name" value="Asp_de-COase-like_dom_sf"/>
</dbReference>
<dbReference type="InterPro" id="IPR003190">
    <property type="entry name" value="Asp_decarbox"/>
</dbReference>
<dbReference type="NCBIfam" id="TIGR00223">
    <property type="entry name" value="panD"/>
    <property type="match status" value="1"/>
</dbReference>
<dbReference type="PANTHER" id="PTHR21012">
    <property type="entry name" value="ASPARTATE 1-DECARBOXYLASE"/>
    <property type="match status" value="1"/>
</dbReference>
<dbReference type="PANTHER" id="PTHR21012:SF0">
    <property type="entry name" value="ASPARTATE 1-DECARBOXYLASE"/>
    <property type="match status" value="1"/>
</dbReference>
<dbReference type="Pfam" id="PF02261">
    <property type="entry name" value="Asp_decarbox"/>
    <property type="match status" value="1"/>
</dbReference>
<dbReference type="PIRSF" id="PIRSF006246">
    <property type="entry name" value="Asp_decarbox"/>
    <property type="match status" value="1"/>
</dbReference>
<dbReference type="SUPFAM" id="SSF50692">
    <property type="entry name" value="ADC-like"/>
    <property type="match status" value="1"/>
</dbReference>
<evidence type="ECO:0000255" key="1">
    <source>
        <dbReference type="HAMAP-Rule" id="MF_00446"/>
    </source>
</evidence>
<protein>
    <recommendedName>
        <fullName evidence="1">Aspartate 1-decarboxylase</fullName>
        <ecNumber evidence="1">4.1.1.11</ecNumber>
    </recommendedName>
    <alternativeName>
        <fullName evidence="1">Aspartate alpha-decarboxylase</fullName>
    </alternativeName>
    <component>
        <recommendedName>
            <fullName evidence="1">Aspartate 1-decarboxylase beta chain</fullName>
        </recommendedName>
    </component>
    <component>
        <recommendedName>
            <fullName evidence="1">Aspartate 1-decarboxylase alpha chain</fullName>
        </recommendedName>
    </component>
</protein>
<feature type="chain" id="PRO_1000026174" description="Aspartate 1-decarboxylase beta chain" evidence="1">
    <location>
        <begin position="1"/>
        <end position="24"/>
    </location>
</feature>
<feature type="chain" id="PRO_0000316065" description="Aspartate 1-decarboxylase alpha chain" evidence="1">
    <location>
        <begin position="25"/>
        <end position="126"/>
    </location>
</feature>
<feature type="active site" description="Schiff-base intermediate with substrate; via pyruvic acid" evidence="1">
    <location>
        <position position="25"/>
    </location>
</feature>
<feature type="active site" description="Proton donor" evidence="1">
    <location>
        <position position="58"/>
    </location>
</feature>
<feature type="binding site" evidence="1">
    <location>
        <position position="57"/>
    </location>
    <ligand>
        <name>substrate</name>
    </ligand>
</feature>
<feature type="binding site" evidence="1">
    <location>
        <begin position="73"/>
        <end position="75"/>
    </location>
    <ligand>
        <name>substrate</name>
    </ligand>
</feature>
<feature type="modified residue" description="Pyruvic acid (Ser)" evidence="1">
    <location>
        <position position="25"/>
    </location>
</feature>
<accession>A7MGP8</accession>
<proteinExistence type="inferred from homology"/>
<sequence>MIRTMLQGKLHRVKVTQADLHYEGSCAIDQDFLEAAGILEYEAIDIYNVTNGKRFSTYAIAGERGSKIISVNGAAAHCADVGDILIIASYVTMPDEQARSWQPKVAYFDGDNEMKRLAKAVPVQVA</sequence>
<keyword id="KW-0068">Autocatalytic cleavage</keyword>
<keyword id="KW-0963">Cytoplasm</keyword>
<keyword id="KW-0210">Decarboxylase</keyword>
<keyword id="KW-0456">Lyase</keyword>
<keyword id="KW-0566">Pantothenate biosynthesis</keyword>
<keyword id="KW-0670">Pyruvate</keyword>
<keyword id="KW-1185">Reference proteome</keyword>
<keyword id="KW-0704">Schiff base</keyword>
<keyword id="KW-0865">Zymogen</keyword>
<comment type="function">
    <text evidence="1">Catalyzes the pyruvoyl-dependent decarboxylation of aspartate to produce beta-alanine.</text>
</comment>
<comment type="catalytic activity">
    <reaction evidence="1">
        <text>L-aspartate + H(+) = beta-alanine + CO2</text>
        <dbReference type="Rhea" id="RHEA:19497"/>
        <dbReference type="ChEBI" id="CHEBI:15378"/>
        <dbReference type="ChEBI" id="CHEBI:16526"/>
        <dbReference type="ChEBI" id="CHEBI:29991"/>
        <dbReference type="ChEBI" id="CHEBI:57966"/>
        <dbReference type="EC" id="4.1.1.11"/>
    </reaction>
</comment>
<comment type="cofactor">
    <cofactor evidence="1">
        <name>pyruvate</name>
        <dbReference type="ChEBI" id="CHEBI:15361"/>
    </cofactor>
    <text evidence="1">Binds 1 pyruvoyl group covalently per subunit.</text>
</comment>
<comment type="pathway">
    <text evidence="1">Cofactor biosynthesis; (R)-pantothenate biosynthesis; beta-alanine from L-aspartate: step 1/1.</text>
</comment>
<comment type="subunit">
    <text evidence="1">Heterooctamer of four alpha and four beta subunits.</text>
</comment>
<comment type="subcellular location">
    <subcellularLocation>
        <location evidence="1">Cytoplasm</location>
    </subcellularLocation>
</comment>
<comment type="PTM">
    <text evidence="1">Is synthesized initially as an inactive proenzyme, which is activated by self-cleavage at a specific serine bond to produce a beta-subunit with a hydroxyl group at its C-terminus and an alpha-subunit with a pyruvoyl group at its N-terminus.</text>
</comment>
<comment type="similarity">
    <text evidence="1">Belongs to the PanD family.</text>
</comment>
<organism>
    <name type="scientific">Cronobacter sakazakii (strain ATCC BAA-894)</name>
    <name type="common">Enterobacter sakazakii</name>
    <dbReference type="NCBI Taxonomy" id="290339"/>
    <lineage>
        <taxon>Bacteria</taxon>
        <taxon>Pseudomonadati</taxon>
        <taxon>Pseudomonadota</taxon>
        <taxon>Gammaproteobacteria</taxon>
        <taxon>Enterobacterales</taxon>
        <taxon>Enterobacteriaceae</taxon>
        <taxon>Cronobacter</taxon>
    </lineage>
</organism>
<gene>
    <name evidence="1" type="primary">panD</name>
    <name type="ordered locus">ESA_03202</name>
</gene>
<name>PAND_CROS8</name>
<reference key="1">
    <citation type="journal article" date="2010" name="PLoS ONE">
        <title>Genome sequence of Cronobacter sakazakii BAA-894 and comparative genomic hybridization analysis with other Cronobacter species.</title>
        <authorList>
            <person name="Kucerova E."/>
            <person name="Clifton S.W."/>
            <person name="Xia X.Q."/>
            <person name="Long F."/>
            <person name="Porwollik S."/>
            <person name="Fulton L."/>
            <person name="Fronick C."/>
            <person name="Minx P."/>
            <person name="Kyung K."/>
            <person name="Warren W."/>
            <person name="Fulton R."/>
            <person name="Feng D."/>
            <person name="Wollam A."/>
            <person name="Shah N."/>
            <person name="Bhonagiri V."/>
            <person name="Nash W.E."/>
            <person name="Hallsworth-Pepin K."/>
            <person name="Wilson R.K."/>
            <person name="McClelland M."/>
            <person name="Forsythe S.J."/>
        </authorList>
    </citation>
    <scope>NUCLEOTIDE SEQUENCE [LARGE SCALE GENOMIC DNA]</scope>
    <source>
        <strain>ATCC BAA-894</strain>
    </source>
</reference>